<sequence>MSAPDTVSPLDLRFSAAELAERRDRIQSFIRDTVAAAGAERCVLGLSGGIDSTTVAHLTVDELGADALHGLVMPGAVSRDQNMSDAERVAEDLGIEYDVVEIDPFVTQLTDVFPDAAGDEVAVGNARARTRAVINYFVANHGDGVVLGTGNRAEAMTGYYTKYGDQAVDCNPIGNLYKMQVRQLARDLGVPEDLVTKAPTAELWADQTDAGELGVDYDTIDAVLAVHVDGGLPASATATHLDIDPSVVETVRDLYGASKHKRAMPPAP</sequence>
<name>NADE_HALS3</name>
<protein>
    <recommendedName>
        <fullName evidence="1">NH(3)-dependent NAD(+) synthetase</fullName>
        <ecNumber evidence="1">6.3.1.5</ecNumber>
    </recommendedName>
</protein>
<proteinExistence type="inferred from homology"/>
<reference key="1">
    <citation type="journal article" date="2008" name="Genomics">
        <title>Evolution in the laboratory: the genome of Halobacterium salinarum strain R1 compared to that of strain NRC-1.</title>
        <authorList>
            <person name="Pfeiffer F."/>
            <person name="Schuster S.C."/>
            <person name="Broicher A."/>
            <person name="Falb M."/>
            <person name="Palm P."/>
            <person name="Rodewald K."/>
            <person name="Ruepp A."/>
            <person name="Soppa J."/>
            <person name="Tittor J."/>
            <person name="Oesterhelt D."/>
        </authorList>
    </citation>
    <scope>NUCLEOTIDE SEQUENCE [LARGE SCALE GENOMIC DNA]</scope>
    <source>
        <strain>ATCC 29341 / DSM 671 / R1</strain>
    </source>
</reference>
<feature type="chain" id="PRO_1000099024" description="NH(3)-dependent NAD(+) synthetase">
    <location>
        <begin position="1"/>
        <end position="268"/>
    </location>
</feature>
<feature type="binding site" evidence="1">
    <location>
        <begin position="45"/>
        <end position="52"/>
    </location>
    <ligand>
        <name>ATP</name>
        <dbReference type="ChEBI" id="CHEBI:30616"/>
    </ligand>
</feature>
<feature type="binding site" evidence="1">
    <location>
        <position position="51"/>
    </location>
    <ligand>
        <name>Mg(2+)</name>
        <dbReference type="ChEBI" id="CHEBI:18420"/>
    </ligand>
</feature>
<feature type="binding site" evidence="1">
    <location>
        <position position="129"/>
    </location>
    <ligand>
        <name>deamido-NAD(+)</name>
        <dbReference type="ChEBI" id="CHEBI:58437"/>
    </ligand>
</feature>
<feature type="binding site" evidence="1">
    <location>
        <position position="149"/>
    </location>
    <ligand>
        <name>ATP</name>
        <dbReference type="ChEBI" id="CHEBI:30616"/>
    </ligand>
</feature>
<feature type="binding site" evidence="1">
    <location>
        <position position="154"/>
    </location>
    <ligand>
        <name>Mg(2+)</name>
        <dbReference type="ChEBI" id="CHEBI:18420"/>
    </ligand>
</feature>
<feature type="binding site" evidence="1">
    <location>
        <position position="162"/>
    </location>
    <ligand>
        <name>deamido-NAD(+)</name>
        <dbReference type="ChEBI" id="CHEBI:58437"/>
    </ligand>
</feature>
<feature type="binding site" evidence="1">
    <location>
        <position position="169"/>
    </location>
    <ligand>
        <name>deamido-NAD(+)</name>
        <dbReference type="ChEBI" id="CHEBI:58437"/>
    </ligand>
</feature>
<feature type="binding site" evidence="1">
    <location>
        <position position="178"/>
    </location>
    <ligand>
        <name>ATP</name>
        <dbReference type="ChEBI" id="CHEBI:30616"/>
    </ligand>
</feature>
<feature type="binding site" evidence="1">
    <location>
        <position position="200"/>
    </location>
    <ligand>
        <name>ATP</name>
        <dbReference type="ChEBI" id="CHEBI:30616"/>
    </ligand>
</feature>
<feature type="binding site" evidence="1">
    <location>
        <begin position="260"/>
        <end position="261"/>
    </location>
    <ligand>
        <name>deamido-NAD(+)</name>
        <dbReference type="ChEBI" id="CHEBI:58437"/>
    </ligand>
</feature>
<gene>
    <name evidence="1" type="primary">nadE</name>
    <name type="ordered locus">OE_3843F</name>
</gene>
<dbReference type="EC" id="6.3.1.5" evidence="1"/>
<dbReference type="EMBL" id="AM774415">
    <property type="protein sequence ID" value="CAP14488.1"/>
    <property type="molecule type" value="Genomic_DNA"/>
</dbReference>
<dbReference type="RefSeq" id="WP_010903494.1">
    <property type="nucleotide sequence ID" value="NC_010364.1"/>
</dbReference>
<dbReference type="SMR" id="B0R6W9"/>
<dbReference type="EnsemblBacteria" id="CAP14488">
    <property type="protein sequence ID" value="CAP14488"/>
    <property type="gene ID" value="OE_3843F"/>
</dbReference>
<dbReference type="KEGG" id="hsl:OE_3843F"/>
<dbReference type="HOGENOM" id="CLU_059327_1_1_2"/>
<dbReference type="PhylomeDB" id="B0R6W9"/>
<dbReference type="UniPathway" id="UPA00253">
    <property type="reaction ID" value="UER00333"/>
</dbReference>
<dbReference type="Proteomes" id="UP000001321">
    <property type="component" value="Chromosome"/>
</dbReference>
<dbReference type="GO" id="GO:0005737">
    <property type="term" value="C:cytoplasm"/>
    <property type="evidence" value="ECO:0007669"/>
    <property type="project" value="InterPro"/>
</dbReference>
<dbReference type="GO" id="GO:0005524">
    <property type="term" value="F:ATP binding"/>
    <property type="evidence" value="ECO:0007669"/>
    <property type="project" value="UniProtKB-UniRule"/>
</dbReference>
<dbReference type="GO" id="GO:0004359">
    <property type="term" value="F:glutaminase activity"/>
    <property type="evidence" value="ECO:0007669"/>
    <property type="project" value="InterPro"/>
</dbReference>
<dbReference type="GO" id="GO:0046872">
    <property type="term" value="F:metal ion binding"/>
    <property type="evidence" value="ECO:0007669"/>
    <property type="project" value="UniProtKB-KW"/>
</dbReference>
<dbReference type="GO" id="GO:0003952">
    <property type="term" value="F:NAD+ synthase (glutamine-hydrolyzing) activity"/>
    <property type="evidence" value="ECO:0007669"/>
    <property type="project" value="InterPro"/>
</dbReference>
<dbReference type="GO" id="GO:0008795">
    <property type="term" value="F:NAD+ synthase activity"/>
    <property type="evidence" value="ECO:0007669"/>
    <property type="project" value="UniProtKB-UniRule"/>
</dbReference>
<dbReference type="GO" id="GO:0009435">
    <property type="term" value="P:NAD biosynthetic process"/>
    <property type="evidence" value="ECO:0007669"/>
    <property type="project" value="UniProtKB-UniRule"/>
</dbReference>
<dbReference type="CDD" id="cd00553">
    <property type="entry name" value="NAD_synthase"/>
    <property type="match status" value="1"/>
</dbReference>
<dbReference type="FunFam" id="3.40.50.620:FF:000106">
    <property type="entry name" value="Glutamine-dependent NAD(+) synthetase"/>
    <property type="match status" value="1"/>
</dbReference>
<dbReference type="Gene3D" id="3.40.50.620">
    <property type="entry name" value="HUPs"/>
    <property type="match status" value="1"/>
</dbReference>
<dbReference type="HAMAP" id="MF_00193">
    <property type="entry name" value="NadE_ammonia_dep"/>
    <property type="match status" value="1"/>
</dbReference>
<dbReference type="InterPro" id="IPR022310">
    <property type="entry name" value="NAD/GMP_synthase"/>
</dbReference>
<dbReference type="InterPro" id="IPR003694">
    <property type="entry name" value="NAD_synthase"/>
</dbReference>
<dbReference type="InterPro" id="IPR022926">
    <property type="entry name" value="NH(3)-dep_NAD(+)_synth"/>
</dbReference>
<dbReference type="InterPro" id="IPR014729">
    <property type="entry name" value="Rossmann-like_a/b/a_fold"/>
</dbReference>
<dbReference type="NCBIfam" id="TIGR00552">
    <property type="entry name" value="nadE"/>
    <property type="match status" value="1"/>
</dbReference>
<dbReference type="NCBIfam" id="NF010587">
    <property type="entry name" value="PRK13980.1"/>
    <property type="match status" value="1"/>
</dbReference>
<dbReference type="PANTHER" id="PTHR23090:SF9">
    <property type="entry name" value="GLUTAMINE-DEPENDENT NAD(+) SYNTHETASE"/>
    <property type="match status" value="1"/>
</dbReference>
<dbReference type="PANTHER" id="PTHR23090">
    <property type="entry name" value="NH 3 /GLUTAMINE-DEPENDENT NAD + SYNTHETASE"/>
    <property type="match status" value="1"/>
</dbReference>
<dbReference type="Pfam" id="PF02540">
    <property type="entry name" value="NAD_synthase"/>
    <property type="match status" value="1"/>
</dbReference>
<dbReference type="SUPFAM" id="SSF52402">
    <property type="entry name" value="Adenine nucleotide alpha hydrolases-like"/>
    <property type="match status" value="1"/>
</dbReference>
<organism>
    <name type="scientific">Halobacterium salinarum (strain ATCC 29341 / DSM 671 / R1)</name>
    <dbReference type="NCBI Taxonomy" id="478009"/>
    <lineage>
        <taxon>Archaea</taxon>
        <taxon>Methanobacteriati</taxon>
        <taxon>Methanobacteriota</taxon>
        <taxon>Stenosarchaea group</taxon>
        <taxon>Halobacteria</taxon>
        <taxon>Halobacteriales</taxon>
        <taxon>Halobacteriaceae</taxon>
        <taxon>Halobacterium</taxon>
        <taxon>Halobacterium salinarum NRC-34001</taxon>
    </lineage>
</organism>
<keyword id="KW-0067">ATP-binding</keyword>
<keyword id="KW-0436">Ligase</keyword>
<keyword id="KW-0460">Magnesium</keyword>
<keyword id="KW-0479">Metal-binding</keyword>
<keyword id="KW-0520">NAD</keyword>
<keyword id="KW-0547">Nucleotide-binding</keyword>
<comment type="function">
    <text evidence="1">Catalyzes the ATP-dependent amidation of deamido-NAD to form NAD. Uses ammonia as a nitrogen source.</text>
</comment>
<comment type="catalytic activity">
    <reaction evidence="1">
        <text>deamido-NAD(+) + NH4(+) + ATP = AMP + diphosphate + NAD(+) + H(+)</text>
        <dbReference type="Rhea" id="RHEA:21188"/>
        <dbReference type="ChEBI" id="CHEBI:15378"/>
        <dbReference type="ChEBI" id="CHEBI:28938"/>
        <dbReference type="ChEBI" id="CHEBI:30616"/>
        <dbReference type="ChEBI" id="CHEBI:33019"/>
        <dbReference type="ChEBI" id="CHEBI:57540"/>
        <dbReference type="ChEBI" id="CHEBI:58437"/>
        <dbReference type="ChEBI" id="CHEBI:456215"/>
        <dbReference type="EC" id="6.3.1.5"/>
    </reaction>
</comment>
<comment type="pathway">
    <text evidence="1">Cofactor biosynthesis; NAD(+) biosynthesis; NAD(+) from deamido-NAD(+) (ammonia route): step 1/1.</text>
</comment>
<comment type="subunit">
    <text evidence="1">Homodimer.</text>
</comment>
<comment type="similarity">
    <text evidence="1">Belongs to the NAD synthetase family.</text>
</comment>
<accession>B0R6W9</accession>
<evidence type="ECO:0000255" key="1">
    <source>
        <dbReference type="HAMAP-Rule" id="MF_00193"/>
    </source>
</evidence>